<evidence type="ECO:0000255" key="1">
    <source>
        <dbReference type="HAMAP-Rule" id="MF_01220"/>
    </source>
</evidence>
<keyword id="KW-0067">ATP-binding</keyword>
<keyword id="KW-0963">Cytoplasm</keyword>
<keyword id="KW-0418">Kinase</keyword>
<keyword id="KW-0547">Nucleotide-binding</keyword>
<keyword id="KW-0665">Pyrimidine biosynthesis</keyword>
<keyword id="KW-1185">Reference proteome</keyword>
<keyword id="KW-0808">Transferase</keyword>
<accession>A8AAG3</accession>
<feature type="chain" id="PRO_0000323989" description="Uridylate kinase">
    <location>
        <begin position="1"/>
        <end position="221"/>
    </location>
</feature>
<feature type="binding site" evidence="1">
    <location>
        <begin position="7"/>
        <end position="11"/>
    </location>
    <ligand>
        <name>ATP</name>
        <dbReference type="ChEBI" id="CHEBI:30616"/>
    </ligand>
</feature>
<feature type="binding site" evidence="1">
    <location>
        <position position="43"/>
    </location>
    <ligand>
        <name>UMP</name>
        <dbReference type="ChEBI" id="CHEBI:57865"/>
    </ligand>
</feature>
<feature type="binding site" evidence="1">
    <location>
        <position position="44"/>
    </location>
    <ligand>
        <name>ATP</name>
        <dbReference type="ChEBI" id="CHEBI:30616"/>
    </ligand>
</feature>
<feature type="binding site" evidence="1">
    <location>
        <position position="48"/>
    </location>
    <ligand>
        <name>ATP</name>
        <dbReference type="ChEBI" id="CHEBI:30616"/>
    </ligand>
</feature>
<feature type="binding site" evidence="1">
    <location>
        <position position="62"/>
    </location>
    <ligand>
        <name>UMP</name>
        <dbReference type="ChEBI" id="CHEBI:57865"/>
    </ligand>
</feature>
<feature type="binding site" evidence="1">
    <location>
        <begin position="109"/>
        <end position="115"/>
    </location>
    <ligand>
        <name>UMP</name>
        <dbReference type="ChEBI" id="CHEBI:57865"/>
    </ligand>
</feature>
<feature type="binding site" evidence="1">
    <location>
        <position position="135"/>
    </location>
    <ligand>
        <name>ATP</name>
        <dbReference type="ChEBI" id="CHEBI:30616"/>
    </ligand>
</feature>
<feature type="binding site" evidence="1">
    <location>
        <position position="141"/>
    </location>
    <ligand>
        <name>ATP</name>
        <dbReference type="ChEBI" id="CHEBI:30616"/>
    </ligand>
</feature>
<dbReference type="EC" id="2.7.4.22" evidence="1"/>
<dbReference type="EMBL" id="CP000816">
    <property type="protein sequence ID" value="ABU81915.1"/>
    <property type="molecule type" value="Genomic_DNA"/>
</dbReference>
<dbReference type="RefSeq" id="WP_011998767.1">
    <property type="nucleotide sequence ID" value="NC_009776.1"/>
</dbReference>
<dbReference type="SMR" id="A8AAG3"/>
<dbReference type="STRING" id="453591.Igni_0733"/>
<dbReference type="GeneID" id="5562469"/>
<dbReference type="KEGG" id="iho:Igni_0733"/>
<dbReference type="eggNOG" id="arCOG00858">
    <property type="taxonomic scope" value="Archaea"/>
</dbReference>
<dbReference type="HOGENOM" id="CLU_079546_0_0_2"/>
<dbReference type="OrthoDB" id="372251at2157"/>
<dbReference type="PhylomeDB" id="A8AAG3"/>
<dbReference type="UniPathway" id="UPA00159">
    <property type="reaction ID" value="UER00275"/>
</dbReference>
<dbReference type="Proteomes" id="UP000000262">
    <property type="component" value="Chromosome"/>
</dbReference>
<dbReference type="GO" id="GO:0005737">
    <property type="term" value="C:cytoplasm"/>
    <property type="evidence" value="ECO:0007669"/>
    <property type="project" value="UniProtKB-SubCell"/>
</dbReference>
<dbReference type="GO" id="GO:0005524">
    <property type="term" value="F:ATP binding"/>
    <property type="evidence" value="ECO:0007669"/>
    <property type="project" value="UniProtKB-KW"/>
</dbReference>
<dbReference type="GO" id="GO:0033862">
    <property type="term" value="F:UMP kinase activity"/>
    <property type="evidence" value="ECO:0007669"/>
    <property type="project" value="UniProtKB-EC"/>
</dbReference>
<dbReference type="GO" id="GO:0044210">
    <property type="term" value="P:'de novo' CTP biosynthetic process"/>
    <property type="evidence" value="ECO:0007669"/>
    <property type="project" value="UniProtKB-UniRule"/>
</dbReference>
<dbReference type="GO" id="GO:0006225">
    <property type="term" value="P:UDP biosynthetic process"/>
    <property type="evidence" value="ECO:0007669"/>
    <property type="project" value="TreeGrafter"/>
</dbReference>
<dbReference type="Gene3D" id="3.40.1160.10">
    <property type="entry name" value="Acetylglutamate kinase-like"/>
    <property type="match status" value="1"/>
</dbReference>
<dbReference type="HAMAP" id="MF_01220_A">
    <property type="entry name" value="PyrH_A"/>
    <property type="match status" value="1"/>
</dbReference>
<dbReference type="InterPro" id="IPR036393">
    <property type="entry name" value="AceGlu_kinase-like_sf"/>
</dbReference>
<dbReference type="InterPro" id="IPR001048">
    <property type="entry name" value="Asp/Glu/Uridylate_kinase"/>
</dbReference>
<dbReference type="InterPro" id="IPR011818">
    <property type="entry name" value="Uridylate_kinase_arch/spir"/>
</dbReference>
<dbReference type="NCBIfam" id="TIGR02076">
    <property type="entry name" value="pyrH_arch"/>
    <property type="match status" value="1"/>
</dbReference>
<dbReference type="PANTHER" id="PTHR42833">
    <property type="entry name" value="URIDYLATE KINASE"/>
    <property type="match status" value="1"/>
</dbReference>
<dbReference type="PANTHER" id="PTHR42833:SF4">
    <property type="entry name" value="URIDYLATE KINASE PUMPKIN, CHLOROPLASTIC"/>
    <property type="match status" value="1"/>
</dbReference>
<dbReference type="Pfam" id="PF00696">
    <property type="entry name" value="AA_kinase"/>
    <property type="match status" value="1"/>
</dbReference>
<dbReference type="SUPFAM" id="SSF53633">
    <property type="entry name" value="Carbamate kinase-like"/>
    <property type="match status" value="1"/>
</dbReference>
<comment type="function">
    <text evidence="1">Catalyzes the reversible phosphorylation of UMP to UDP.</text>
</comment>
<comment type="catalytic activity">
    <reaction evidence="1">
        <text>UMP + ATP = UDP + ADP</text>
        <dbReference type="Rhea" id="RHEA:24400"/>
        <dbReference type="ChEBI" id="CHEBI:30616"/>
        <dbReference type="ChEBI" id="CHEBI:57865"/>
        <dbReference type="ChEBI" id="CHEBI:58223"/>
        <dbReference type="ChEBI" id="CHEBI:456216"/>
        <dbReference type="EC" id="2.7.4.22"/>
    </reaction>
</comment>
<comment type="activity regulation">
    <text evidence="1">Inhibited by UTP.</text>
</comment>
<comment type="pathway">
    <text evidence="1">Pyrimidine metabolism; CTP biosynthesis via de novo pathway; UDP from UMP (UMPK route): step 1/1.</text>
</comment>
<comment type="subunit">
    <text evidence="1">Homohexamer.</text>
</comment>
<comment type="subcellular location">
    <subcellularLocation>
        <location evidence="1">Cytoplasm</location>
    </subcellularLocation>
</comment>
<comment type="similarity">
    <text evidence="1">Belongs to the UMP kinase family.</text>
</comment>
<organism>
    <name type="scientific">Ignicoccus hospitalis (strain KIN4/I / DSM 18386 / JCM 14125)</name>
    <dbReference type="NCBI Taxonomy" id="453591"/>
    <lineage>
        <taxon>Archaea</taxon>
        <taxon>Thermoproteota</taxon>
        <taxon>Thermoprotei</taxon>
        <taxon>Desulfurococcales</taxon>
        <taxon>Desulfurococcaceae</taxon>
        <taxon>Ignicoccus</taxon>
    </lineage>
</organism>
<name>PYRH_IGNH4</name>
<gene>
    <name evidence="1" type="primary">pyrH</name>
    <name type="ordered locus">Igni_0733</name>
</gene>
<reference key="1">
    <citation type="journal article" date="2008" name="Genome Biol.">
        <title>A genomic analysis of the archaeal system Ignicoccus hospitalis-Nanoarchaeum equitans.</title>
        <authorList>
            <person name="Podar M."/>
            <person name="Anderson I."/>
            <person name="Makarova K.S."/>
            <person name="Elkins J.G."/>
            <person name="Ivanova N."/>
            <person name="Wall M.A."/>
            <person name="Lykidis A."/>
            <person name="Mavromatis K."/>
            <person name="Sun H."/>
            <person name="Hudson M.E."/>
            <person name="Chen W."/>
            <person name="Deciu C."/>
            <person name="Hutchison D."/>
            <person name="Eads J.R."/>
            <person name="Anderson A."/>
            <person name="Fernandes F."/>
            <person name="Szeto E."/>
            <person name="Lapidus A."/>
            <person name="Kyrpides N.C."/>
            <person name="Saier M.H. Jr."/>
            <person name="Richardson P.M."/>
            <person name="Rachel R."/>
            <person name="Huber H."/>
            <person name="Eisen J.A."/>
            <person name="Koonin E.V."/>
            <person name="Keller M."/>
            <person name="Stetter K.O."/>
        </authorList>
    </citation>
    <scope>NUCLEOTIDE SEQUENCE [LARGE SCALE GENOMIC DNA]</scope>
    <source>
        <strain>KIN4/I / DSM 18386 / JCM 14125</strain>
    </source>
</reference>
<proteinExistence type="inferred from homology"/>
<protein>
    <recommendedName>
        <fullName evidence="1">Uridylate kinase</fullName>
        <shortName evidence="1">UK</shortName>
        <ecNumber evidence="1">2.7.4.22</ecNumber>
    </recommendedName>
    <alternativeName>
        <fullName evidence="1">Uridine monophosphate kinase</fullName>
        <shortName evidence="1">UMP kinase</shortName>
        <shortName evidence="1">UMPK</shortName>
    </alternativeName>
</protein>
<sequence length="221" mass="24023">MKTLVLKISGKFVSPYDTPLVEGYAKTLEALRRKYKLAVVVGGGSVARKYIELAPPSKGLKDLIGIEVSRLNALLLSMHTPSAKKVIPKSASEVLELWDGEDILIVGGLQPGQSTNAVALVVAELVGADLVVNATTVDAVYDKPPSQPGAKRIEKIKARELQRLLESFDWKNEPGRYELMDSIALQIAERSKIPIAVIYGGEPERIPSIVEEEAWGTLILP</sequence>